<sequence length="365" mass="39346">MKKQRIVVKIGSSSLTNSKGSIDEAKIREHVQAISVLKKAGHEMILITSGAVAAGFSSLGYPSRPVTIKGKQAAAAVGQTLLMQQYMNQFKQYSLTPGQILLTRNDFSKRERYRNAYATIMELLERGVIPIINENDSTSVEELTFGDNDMLSALVSGLIHADQLMILTDINGLYDANPNENPEAKRFDYLPEITPELLGYAGSAGSKVGTGGMKSKLLATQTALSLGVKVFIGTGSGEQKLADILDGRGDGTYIGDKELSSVNNTRQWIQFHSPISGEIIIDAGAEEAMIHNGSSLLPAGVVGVNGSFPKGAVVEVRGPGGVIGKGQTHYSSEEIMEAKGKRSDELDFEKTFEVIHRNDWVNVKD</sequence>
<comment type="function">
    <text evidence="1">Catalyzes the transfer of a phosphate group to glutamate to form L-glutamate 5-phosphate.</text>
</comment>
<comment type="catalytic activity">
    <reaction evidence="1">
        <text>L-glutamate + ATP = L-glutamyl 5-phosphate + ADP</text>
        <dbReference type="Rhea" id="RHEA:14877"/>
        <dbReference type="ChEBI" id="CHEBI:29985"/>
        <dbReference type="ChEBI" id="CHEBI:30616"/>
        <dbReference type="ChEBI" id="CHEBI:58274"/>
        <dbReference type="ChEBI" id="CHEBI:456216"/>
        <dbReference type="EC" id="2.7.2.11"/>
    </reaction>
</comment>
<comment type="pathway">
    <text evidence="1">Amino-acid biosynthesis; L-proline biosynthesis; L-glutamate 5-semialdehyde from L-glutamate: step 1/2.</text>
</comment>
<comment type="subcellular location">
    <subcellularLocation>
        <location evidence="1">Cytoplasm</location>
    </subcellularLocation>
</comment>
<comment type="similarity">
    <text evidence="1">Belongs to the glutamate 5-kinase family.</text>
</comment>
<reference key="1">
    <citation type="journal article" date="1994" name="J. Bacteriol.">
        <title>Multiple copies of the proB gene enhance degS-dependent extracellular protease production in Bacillus subtilis.</title>
        <authorList>
            <person name="Ogura M."/>
            <person name="Kawata-Mukai M."/>
            <person name="Itaya M."/>
            <person name="Takio K."/>
            <person name="Tanaka T."/>
        </authorList>
    </citation>
    <scope>NUCLEOTIDE SEQUENCE [GENOMIC DNA]</scope>
    <scope>PROTEIN SEQUENCE OF 1-20</scope>
    <source>
        <strain>168</strain>
    </source>
</reference>
<reference key="2">
    <citation type="submission" date="1997-11" db="EMBL/GenBank/DDBJ databases">
        <title>Sequence of the Bacillus subtilis genome between xlyA and ykoR.</title>
        <authorList>
            <person name="Devine K.M."/>
        </authorList>
    </citation>
    <scope>NUCLEOTIDE SEQUENCE [GENOMIC DNA]</scope>
    <source>
        <strain>168</strain>
    </source>
</reference>
<reference key="3">
    <citation type="journal article" date="1997" name="Nature">
        <title>The complete genome sequence of the Gram-positive bacterium Bacillus subtilis.</title>
        <authorList>
            <person name="Kunst F."/>
            <person name="Ogasawara N."/>
            <person name="Moszer I."/>
            <person name="Albertini A.M."/>
            <person name="Alloni G."/>
            <person name="Azevedo V."/>
            <person name="Bertero M.G."/>
            <person name="Bessieres P."/>
            <person name="Bolotin A."/>
            <person name="Borchert S."/>
            <person name="Borriss R."/>
            <person name="Boursier L."/>
            <person name="Brans A."/>
            <person name="Braun M."/>
            <person name="Brignell S.C."/>
            <person name="Bron S."/>
            <person name="Brouillet S."/>
            <person name="Bruschi C.V."/>
            <person name="Caldwell B."/>
            <person name="Capuano V."/>
            <person name="Carter N.M."/>
            <person name="Choi S.-K."/>
            <person name="Codani J.-J."/>
            <person name="Connerton I.F."/>
            <person name="Cummings N.J."/>
            <person name="Daniel R.A."/>
            <person name="Denizot F."/>
            <person name="Devine K.M."/>
            <person name="Duesterhoeft A."/>
            <person name="Ehrlich S.D."/>
            <person name="Emmerson P.T."/>
            <person name="Entian K.-D."/>
            <person name="Errington J."/>
            <person name="Fabret C."/>
            <person name="Ferrari E."/>
            <person name="Foulger D."/>
            <person name="Fritz C."/>
            <person name="Fujita M."/>
            <person name="Fujita Y."/>
            <person name="Fuma S."/>
            <person name="Galizzi A."/>
            <person name="Galleron N."/>
            <person name="Ghim S.-Y."/>
            <person name="Glaser P."/>
            <person name="Goffeau A."/>
            <person name="Golightly E.J."/>
            <person name="Grandi G."/>
            <person name="Guiseppi G."/>
            <person name="Guy B.J."/>
            <person name="Haga K."/>
            <person name="Haiech J."/>
            <person name="Harwood C.R."/>
            <person name="Henaut A."/>
            <person name="Hilbert H."/>
            <person name="Holsappel S."/>
            <person name="Hosono S."/>
            <person name="Hullo M.-F."/>
            <person name="Itaya M."/>
            <person name="Jones L.-M."/>
            <person name="Joris B."/>
            <person name="Karamata D."/>
            <person name="Kasahara Y."/>
            <person name="Klaerr-Blanchard M."/>
            <person name="Klein C."/>
            <person name="Kobayashi Y."/>
            <person name="Koetter P."/>
            <person name="Koningstein G."/>
            <person name="Krogh S."/>
            <person name="Kumano M."/>
            <person name="Kurita K."/>
            <person name="Lapidus A."/>
            <person name="Lardinois S."/>
            <person name="Lauber J."/>
            <person name="Lazarevic V."/>
            <person name="Lee S.-M."/>
            <person name="Levine A."/>
            <person name="Liu H."/>
            <person name="Masuda S."/>
            <person name="Mauel C."/>
            <person name="Medigue C."/>
            <person name="Medina N."/>
            <person name="Mellado R.P."/>
            <person name="Mizuno M."/>
            <person name="Moestl D."/>
            <person name="Nakai S."/>
            <person name="Noback M."/>
            <person name="Noone D."/>
            <person name="O'Reilly M."/>
            <person name="Ogawa K."/>
            <person name="Ogiwara A."/>
            <person name="Oudega B."/>
            <person name="Park S.-H."/>
            <person name="Parro V."/>
            <person name="Pohl T.M."/>
            <person name="Portetelle D."/>
            <person name="Porwollik S."/>
            <person name="Prescott A.M."/>
            <person name="Presecan E."/>
            <person name="Pujic P."/>
            <person name="Purnelle B."/>
            <person name="Rapoport G."/>
            <person name="Rey M."/>
            <person name="Reynolds S."/>
            <person name="Rieger M."/>
            <person name="Rivolta C."/>
            <person name="Rocha E."/>
            <person name="Roche B."/>
            <person name="Rose M."/>
            <person name="Sadaie Y."/>
            <person name="Sato T."/>
            <person name="Scanlan E."/>
            <person name="Schleich S."/>
            <person name="Schroeter R."/>
            <person name="Scoffone F."/>
            <person name="Sekiguchi J."/>
            <person name="Sekowska A."/>
            <person name="Seror S.J."/>
            <person name="Serror P."/>
            <person name="Shin B.-S."/>
            <person name="Soldo B."/>
            <person name="Sorokin A."/>
            <person name="Tacconi E."/>
            <person name="Takagi T."/>
            <person name="Takahashi H."/>
            <person name="Takemaru K."/>
            <person name="Takeuchi M."/>
            <person name="Tamakoshi A."/>
            <person name="Tanaka T."/>
            <person name="Terpstra P."/>
            <person name="Tognoni A."/>
            <person name="Tosato V."/>
            <person name="Uchiyama S."/>
            <person name="Vandenbol M."/>
            <person name="Vannier F."/>
            <person name="Vassarotti A."/>
            <person name="Viari A."/>
            <person name="Wambutt R."/>
            <person name="Wedler E."/>
            <person name="Wedler H."/>
            <person name="Weitzenegger T."/>
            <person name="Winters P."/>
            <person name="Wipat A."/>
            <person name="Yamamoto H."/>
            <person name="Yamane K."/>
            <person name="Yasumoto K."/>
            <person name="Yata K."/>
            <person name="Yoshida K."/>
            <person name="Yoshikawa H.-F."/>
            <person name="Zumstein E."/>
            <person name="Yoshikawa H."/>
            <person name="Danchin A."/>
        </authorList>
    </citation>
    <scope>NUCLEOTIDE SEQUENCE [LARGE SCALE GENOMIC DNA]</scope>
    <source>
        <strain>168</strain>
    </source>
</reference>
<reference key="4">
    <citation type="journal article" date="2009" name="Microbiology">
        <title>From a consortium sequence to a unified sequence: the Bacillus subtilis 168 reference genome a decade later.</title>
        <authorList>
            <person name="Barbe V."/>
            <person name="Cruveiller S."/>
            <person name="Kunst F."/>
            <person name="Lenoble P."/>
            <person name="Meurice G."/>
            <person name="Sekowska A."/>
            <person name="Vallenet D."/>
            <person name="Wang T."/>
            <person name="Moszer I."/>
            <person name="Medigue C."/>
            <person name="Danchin A."/>
        </authorList>
    </citation>
    <scope>SEQUENCE REVISION TO 51 AND 54</scope>
</reference>
<dbReference type="EC" id="2.7.2.11" evidence="1"/>
<dbReference type="EMBL" id="D26044">
    <property type="protein sequence ID" value="BAA05044.1"/>
    <property type="molecule type" value="Genomic_DNA"/>
</dbReference>
<dbReference type="EMBL" id="AJ002571">
    <property type="protein sequence ID" value="CAA05591.1"/>
    <property type="molecule type" value="Genomic_DNA"/>
</dbReference>
<dbReference type="EMBL" id="AL009126">
    <property type="protein sequence ID" value="CAB13169.2"/>
    <property type="molecule type" value="Genomic_DNA"/>
</dbReference>
<dbReference type="PIR" id="D69682">
    <property type="entry name" value="D69682"/>
</dbReference>
<dbReference type="RefSeq" id="NP_389195.2">
    <property type="nucleotide sequence ID" value="NC_000964.3"/>
</dbReference>
<dbReference type="RefSeq" id="WP_003244794.1">
    <property type="nucleotide sequence ID" value="NZ_OZ025638.1"/>
</dbReference>
<dbReference type="SMR" id="P39820"/>
<dbReference type="FunCoup" id="P39820">
    <property type="interactions" value="420"/>
</dbReference>
<dbReference type="STRING" id="224308.BSU13120"/>
<dbReference type="PaxDb" id="224308-BSU13120"/>
<dbReference type="DNASU" id="936790"/>
<dbReference type="EnsemblBacteria" id="CAB13169">
    <property type="protein sequence ID" value="CAB13169"/>
    <property type="gene ID" value="BSU_13120"/>
</dbReference>
<dbReference type="GeneID" id="936790"/>
<dbReference type="KEGG" id="bsu:BSU13120"/>
<dbReference type="PATRIC" id="fig|224308.179.peg.1424"/>
<dbReference type="eggNOG" id="COG0263">
    <property type="taxonomic scope" value="Bacteria"/>
</dbReference>
<dbReference type="InParanoid" id="P39820"/>
<dbReference type="OrthoDB" id="9804434at2"/>
<dbReference type="PhylomeDB" id="P39820"/>
<dbReference type="BioCyc" id="BSUB:BSU13120-MONOMER"/>
<dbReference type="UniPathway" id="UPA00098">
    <property type="reaction ID" value="UER00359"/>
</dbReference>
<dbReference type="Proteomes" id="UP000001570">
    <property type="component" value="Chromosome"/>
</dbReference>
<dbReference type="GO" id="GO:0005829">
    <property type="term" value="C:cytosol"/>
    <property type="evidence" value="ECO:0000318"/>
    <property type="project" value="GO_Central"/>
</dbReference>
<dbReference type="GO" id="GO:0005524">
    <property type="term" value="F:ATP binding"/>
    <property type="evidence" value="ECO:0007669"/>
    <property type="project" value="UniProtKB-KW"/>
</dbReference>
<dbReference type="GO" id="GO:0004349">
    <property type="term" value="F:glutamate 5-kinase activity"/>
    <property type="evidence" value="ECO:0000318"/>
    <property type="project" value="GO_Central"/>
</dbReference>
<dbReference type="GO" id="GO:0003723">
    <property type="term" value="F:RNA binding"/>
    <property type="evidence" value="ECO:0007669"/>
    <property type="project" value="InterPro"/>
</dbReference>
<dbReference type="GO" id="GO:0055129">
    <property type="term" value="P:L-proline biosynthetic process"/>
    <property type="evidence" value="ECO:0007669"/>
    <property type="project" value="UniProtKB-UniRule"/>
</dbReference>
<dbReference type="GO" id="GO:0006561">
    <property type="term" value="P:proline biosynthetic process"/>
    <property type="evidence" value="ECO:0000318"/>
    <property type="project" value="GO_Central"/>
</dbReference>
<dbReference type="CDD" id="cd04242">
    <property type="entry name" value="AAK_G5K_ProB"/>
    <property type="match status" value="1"/>
</dbReference>
<dbReference type="CDD" id="cd21157">
    <property type="entry name" value="PUA_G5K"/>
    <property type="match status" value="1"/>
</dbReference>
<dbReference type="FunFam" id="3.40.1160.10:FF:000018">
    <property type="entry name" value="Glutamate 5-kinase"/>
    <property type="match status" value="1"/>
</dbReference>
<dbReference type="Gene3D" id="3.40.1160.10">
    <property type="entry name" value="Acetylglutamate kinase-like"/>
    <property type="match status" value="1"/>
</dbReference>
<dbReference type="Gene3D" id="2.30.130.10">
    <property type="entry name" value="PUA domain"/>
    <property type="match status" value="1"/>
</dbReference>
<dbReference type="HAMAP" id="MF_00456">
    <property type="entry name" value="ProB"/>
    <property type="match status" value="1"/>
</dbReference>
<dbReference type="InterPro" id="IPR036393">
    <property type="entry name" value="AceGlu_kinase-like_sf"/>
</dbReference>
<dbReference type="InterPro" id="IPR001048">
    <property type="entry name" value="Asp/Glu/Uridylate_kinase"/>
</dbReference>
<dbReference type="InterPro" id="IPR041739">
    <property type="entry name" value="G5K_ProB"/>
</dbReference>
<dbReference type="InterPro" id="IPR001057">
    <property type="entry name" value="Glu/AcGlu_kinase"/>
</dbReference>
<dbReference type="InterPro" id="IPR011529">
    <property type="entry name" value="Glu_5kinase"/>
</dbReference>
<dbReference type="InterPro" id="IPR005715">
    <property type="entry name" value="Glu_5kinase/COase_Synthase"/>
</dbReference>
<dbReference type="InterPro" id="IPR019797">
    <property type="entry name" value="Glutamate_5-kinase_CS"/>
</dbReference>
<dbReference type="InterPro" id="IPR002478">
    <property type="entry name" value="PUA"/>
</dbReference>
<dbReference type="InterPro" id="IPR015947">
    <property type="entry name" value="PUA-like_sf"/>
</dbReference>
<dbReference type="InterPro" id="IPR036974">
    <property type="entry name" value="PUA_sf"/>
</dbReference>
<dbReference type="NCBIfam" id="TIGR01027">
    <property type="entry name" value="proB"/>
    <property type="match status" value="1"/>
</dbReference>
<dbReference type="PANTHER" id="PTHR43654">
    <property type="entry name" value="GLUTAMATE 5-KINASE"/>
    <property type="match status" value="1"/>
</dbReference>
<dbReference type="PANTHER" id="PTHR43654:SF1">
    <property type="entry name" value="ISOPENTENYL PHOSPHATE KINASE"/>
    <property type="match status" value="1"/>
</dbReference>
<dbReference type="Pfam" id="PF00696">
    <property type="entry name" value="AA_kinase"/>
    <property type="match status" value="1"/>
</dbReference>
<dbReference type="Pfam" id="PF01472">
    <property type="entry name" value="PUA"/>
    <property type="match status" value="1"/>
</dbReference>
<dbReference type="PIRSF" id="PIRSF000729">
    <property type="entry name" value="GK"/>
    <property type="match status" value="1"/>
</dbReference>
<dbReference type="PRINTS" id="PR00474">
    <property type="entry name" value="GLU5KINASE"/>
</dbReference>
<dbReference type="SMART" id="SM00359">
    <property type="entry name" value="PUA"/>
    <property type="match status" value="1"/>
</dbReference>
<dbReference type="SUPFAM" id="SSF53633">
    <property type="entry name" value="Carbamate kinase-like"/>
    <property type="match status" value="1"/>
</dbReference>
<dbReference type="SUPFAM" id="SSF88697">
    <property type="entry name" value="PUA domain-like"/>
    <property type="match status" value="1"/>
</dbReference>
<dbReference type="PROSITE" id="PS00902">
    <property type="entry name" value="GLUTAMATE_5_KINASE"/>
    <property type="match status" value="1"/>
</dbReference>
<dbReference type="PROSITE" id="PS50890">
    <property type="entry name" value="PUA"/>
    <property type="match status" value="1"/>
</dbReference>
<keyword id="KW-0028">Amino-acid biosynthesis</keyword>
<keyword id="KW-0067">ATP-binding</keyword>
<keyword id="KW-0963">Cytoplasm</keyword>
<keyword id="KW-0903">Direct protein sequencing</keyword>
<keyword id="KW-0418">Kinase</keyword>
<keyword id="KW-0547">Nucleotide-binding</keyword>
<keyword id="KW-0641">Proline biosynthesis</keyword>
<keyword id="KW-1185">Reference proteome</keyword>
<keyword id="KW-0808">Transferase</keyword>
<accession>P39820</accession>
<accession>O34562</accession>
<protein>
    <recommendedName>
        <fullName evidence="1">Glutamate 5-kinase 1</fullName>
        <ecNumber evidence="1">2.7.2.11</ecNumber>
    </recommendedName>
    <alternativeName>
        <fullName evidence="1">Gamma-glutamyl kinase 1</fullName>
        <shortName evidence="1">GK 1</shortName>
    </alternativeName>
</protein>
<organism>
    <name type="scientific">Bacillus subtilis (strain 168)</name>
    <dbReference type="NCBI Taxonomy" id="224308"/>
    <lineage>
        <taxon>Bacteria</taxon>
        <taxon>Bacillati</taxon>
        <taxon>Bacillota</taxon>
        <taxon>Bacilli</taxon>
        <taxon>Bacillales</taxon>
        <taxon>Bacillaceae</taxon>
        <taxon>Bacillus</taxon>
    </lineage>
</organism>
<proteinExistence type="evidence at protein level"/>
<evidence type="ECO:0000255" key="1">
    <source>
        <dbReference type="HAMAP-Rule" id="MF_00456"/>
    </source>
</evidence>
<evidence type="ECO:0000305" key="2"/>
<gene>
    <name evidence="1" type="primary">proB</name>
    <name type="ordered locus">BSU13120</name>
</gene>
<name>PROB_BACSU</name>
<feature type="chain" id="PRO_0000109641" description="Glutamate 5-kinase 1">
    <location>
        <begin position="1"/>
        <end position="365"/>
    </location>
</feature>
<feature type="domain" description="PUA" evidence="1">
    <location>
        <begin position="276"/>
        <end position="353"/>
    </location>
</feature>
<feature type="binding site" evidence="1">
    <location>
        <position position="9"/>
    </location>
    <ligand>
        <name>ATP</name>
        <dbReference type="ChEBI" id="CHEBI:30616"/>
    </ligand>
</feature>
<feature type="binding site" evidence="1">
    <location>
        <position position="49"/>
    </location>
    <ligand>
        <name>substrate</name>
    </ligand>
</feature>
<feature type="binding site" evidence="1">
    <location>
        <position position="136"/>
    </location>
    <ligand>
        <name>substrate</name>
    </ligand>
</feature>
<feature type="binding site" evidence="1">
    <location>
        <position position="148"/>
    </location>
    <ligand>
        <name>substrate</name>
    </ligand>
</feature>
<feature type="binding site" evidence="1">
    <location>
        <begin position="168"/>
        <end position="169"/>
    </location>
    <ligand>
        <name>ATP</name>
        <dbReference type="ChEBI" id="CHEBI:30616"/>
    </ligand>
</feature>
<feature type="binding site" evidence="1">
    <location>
        <begin position="210"/>
        <end position="216"/>
    </location>
    <ligand>
        <name>ATP</name>
        <dbReference type="ChEBI" id="CHEBI:30616"/>
    </ligand>
</feature>
<feature type="sequence conflict" description="In Ref. 1; BAA05044." evidence="2" ref="1">
    <original>AKIREHVQ</original>
    <variation>QNQRACS</variation>
    <location>
        <begin position="25"/>
        <end position="32"/>
    </location>
</feature>
<feature type="sequence conflict" description="In Ref. 2; CAA05591." evidence="2" ref="2">
    <original>A</original>
    <variation>P</variation>
    <location>
        <position position="51"/>
    </location>
</feature>
<feature type="sequence conflict" description="In Ref. 2; CAA05591." evidence="2" ref="2">
    <original>A</original>
    <variation>R</variation>
    <location>
        <position position="54"/>
    </location>
</feature>
<feature type="sequence conflict" description="In Ref. 1; BAA05044." evidence="2" ref="1">
    <original>NPEAK</original>
    <variation>ILSE</variation>
    <location>
        <begin position="181"/>
        <end position="185"/>
    </location>
</feature>
<feature type="sequence conflict" description="In Ref. 1; BAA05044." evidence="2" ref="1">
    <location>
        <begin position="357"/>
        <end position="365"/>
    </location>
</feature>